<reference key="1">
    <citation type="journal article" date="2012" name="Stand. Genomic Sci.">
        <title>Complete genome sequence of Polynucleobacter necessarius subsp. asymbioticus type strain (QLW-P1DMWA-1(T)).</title>
        <authorList>
            <person name="Meincke L."/>
            <person name="Copeland A."/>
            <person name="Lapidus A."/>
            <person name="Lucas S."/>
            <person name="Berry K.W."/>
            <person name="Del Rio T.G."/>
            <person name="Hammon N."/>
            <person name="Dalin E."/>
            <person name="Tice H."/>
            <person name="Pitluck S."/>
            <person name="Richardson P."/>
            <person name="Bruce D."/>
            <person name="Goodwin L."/>
            <person name="Han C."/>
            <person name="Tapia R."/>
            <person name="Detter J.C."/>
            <person name="Schmutz J."/>
            <person name="Brettin T."/>
            <person name="Larimer F."/>
            <person name="Land M."/>
            <person name="Hauser L."/>
            <person name="Kyrpides N.C."/>
            <person name="Ivanova N."/>
            <person name="Goker M."/>
            <person name="Woyke T."/>
            <person name="Wu Q.L."/>
            <person name="Pockl M."/>
            <person name="Hahn M.W."/>
            <person name="Klenk H.P."/>
        </authorList>
    </citation>
    <scope>NUCLEOTIDE SEQUENCE [LARGE SCALE GENOMIC DNA]</scope>
    <source>
        <strain>DSM 18221 / CIP 109841 / QLW-P1DMWA-1</strain>
    </source>
</reference>
<gene>
    <name evidence="1" type="primary">rplQ</name>
    <name type="ordered locus">Pnuc_0079</name>
</gene>
<name>RL17_POLAQ</name>
<organism>
    <name type="scientific">Polynucleobacter asymbioticus (strain DSM 18221 / CIP 109841 / QLW-P1DMWA-1)</name>
    <name type="common">Polynucleobacter necessarius subsp. asymbioticus</name>
    <dbReference type="NCBI Taxonomy" id="312153"/>
    <lineage>
        <taxon>Bacteria</taxon>
        <taxon>Pseudomonadati</taxon>
        <taxon>Pseudomonadota</taxon>
        <taxon>Betaproteobacteria</taxon>
        <taxon>Burkholderiales</taxon>
        <taxon>Burkholderiaceae</taxon>
        <taxon>Polynucleobacter</taxon>
    </lineage>
</organism>
<accession>A4SUY7</accession>
<evidence type="ECO:0000255" key="1">
    <source>
        <dbReference type="HAMAP-Rule" id="MF_01368"/>
    </source>
</evidence>
<evidence type="ECO:0000305" key="2"/>
<comment type="subunit">
    <text evidence="1">Part of the 50S ribosomal subunit. Contacts protein L32.</text>
</comment>
<comment type="similarity">
    <text evidence="1">Belongs to the bacterial ribosomal protein bL17 family.</text>
</comment>
<feature type="chain" id="PRO_1000087185" description="Large ribosomal subunit protein bL17">
    <location>
        <begin position="1"/>
        <end position="129"/>
    </location>
</feature>
<sequence length="129" mass="14760">MRHGNGLRKLNRTSSHRLAMLRNMSNSLLEHEVIKTTLPKAKELRMVVEPLITLGKKDNLANRRLAFNRTRDRDIVTKLFTELGPRYATRPGGYLRILKFGFRHGDNAPMALVELVDRPEVEETAVVAE</sequence>
<proteinExistence type="inferred from homology"/>
<dbReference type="EMBL" id="CP000655">
    <property type="protein sequence ID" value="ABP33301.1"/>
    <property type="molecule type" value="Genomic_DNA"/>
</dbReference>
<dbReference type="RefSeq" id="WP_011901926.1">
    <property type="nucleotide sequence ID" value="NC_009379.1"/>
</dbReference>
<dbReference type="SMR" id="A4SUY7"/>
<dbReference type="GeneID" id="31480426"/>
<dbReference type="KEGG" id="pnu:Pnuc_0079"/>
<dbReference type="eggNOG" id="COG0203">
    <property type="taxonomic scope" value="Bacteria"/>
</dbReference>
<dbReference type="HOGENOM" id="CLU_074407_2_0_4"/>
<dbReference type="Proteomes" id="UP000000231">
    <property type="component" value="Chromosome"/>
</dbReference>
<dbReference type="GO" id="GO:0022625">
    <property type="term" value="C:cytosolic large ribosomal subunit"/>
    <property type="evidence" value="ECO:0007669"/>
    <property type="project" value="TreeGrafter"/>
</dbReference>
<dbReference type="GO" id="GO:0003735">
    <property type="term" value="F:structural constituent of ribosome"/>
    <property type="evidence" value="ECO:0007669"/>
    <property type="project" value="InterPro"/>
</dbReference>
<dbReference type="GO" id="GO:0006412">
    <property type="term" value="P:translation"/>
    <property type="evidence" value="ECO:0007669"/>
    <property type="project" value="UniProtKB-UniRule"/>
</dbReference>
<dbReference type="FunFam" id="3.90.1030.10:FF:000001">
    <property type="entry name" value="50S ribosomal protein L17"/>
    <property type="match status" value="1"/>
</dbReference>
<dbReference type="Gene3D" id="3.90.1030.10">
    <property type="entry name" value="Ribosomal protein L17"/>
    <property type="match status" value="1"/>
</dbReference>
<dbReference type="HAMAP" id="MF_01368">
    <property type="entry name" value="Ribosomal_bL17"/>
    <property type="match status" value="1"/>
</dbReference>
<dbReference type="InterPro" id="IPR000456">
    <property type="entry name" value="Ribosomal_bL17"/>
</dbReference>
<dbReference type="InterPro" id="IPR047859">
    <property type="entry name" value="Ribosomal_bL17_CS"/>
</dbReference>
<dbReference type="InterPro" id="IPR036373">
    <property type="entry name" value="Ribosomal_bL17_sf"/>
</dbReference>
<dbReference type="NCBIfam" id="TIGR00059">
    <property type="entry name" value="L17"/>
    <property type="match status" value="1"/>
</dbReference>
<dbReference type="PANTHER" id="PTHR14413:SF16">
    <property type="entry name" value="LARGE RIBOSOMAL SUBUNIT PROTEIN BL17M"/>
    <property type="match status" value="1"/>
</dbReference>
<dbReference type="PANTHER" id="PTHR14413">
    <property type="entry name" value="RIBOSOMAL PROTEIN L17"/>
    <property type="match status" value="1"/>
</dbReference>
<dbReference type="Pfam" id="PF01196">
    <property type="entry name" value="Ribosomal_L17"/>
    <property type="match status" value="1"/>
</dbReference>
<dbReference type="SUPFAM" id="SSF64263">
    <property type="entry name" value="Prokaryotic ribosomal protein L17"/>
    <property type="match status" value="1"/>
</dbReference>
<dbReference type="PROSITE" id="PS01167">
    <property type="entry name" value="RIBOSOMAL_L17"/>
    <property type="match status" value="1"/>
</dbReference>
<protein>
    <recommendedName>
        <fullName evidence="1">Large ribosomal subunit protein bL17</fullName>
    </recommendedName>
    <alternativeName>
        <fullName evidence="2">50S ribosomal protein L17</fullName>
    </alternativeName>
</protein>
<keyword id="KW-1185">Reference proteome</keyword>
<keyword id="KW-0687">Ribonucleoprotein</keyword>
<keyword id="KW-0689">Ribosomal protein</keyword>